<name>3S1CB_NAJKA</name>
<comment type="function">
    <text evidence="3">Binds to muscle nicotinic acetylcholine receptor (nAChR) and inhibit acetylcholine from binding to the receptor, thereby impairing neuromuscular transmission.</text>
</comment>
<comment type="subcellular location">
    <subcellularLocation>
        <location evidence="4">Secreted</location>
    </subcellularLocation>
</comment>
<comment type="tissue specificity">
    <text evidence="6">Expressed by the venom gland.</text>
</comment>
<comment type="toxic dose">
    <text evidence="4">LD(50) is 65 mg/kg by intraperitoneal injection into mice.</text>
</comment>
<comment type="miscellaneous">
    <text evidence="7">It inhibits muscle contraction with an IC(50) of 0.04 ug/ml.</text>
</comment>
<comment type="similarity">
    <text evidence="6">Belongs to the three-finger toxin family. Short-chain subfamily. Type I alpha-neurotoxin sub-subfamily.</text>
</comment>
<organism>
    <name type="scientific">Naja kaouthia</name>
    <name type="common">Monocled cobra</name>
    <name type="synonym">Naja siamensis</name>
    <dbReference type="NCBI Taxonomy" id="8649"/>
    <lineage>
        <taxon>Eukaryota</taxon>
        <taxon>Metazoa</taxon>
        <taxon>Chordata</taxon>
        <taxon>Craniata</taxon>
        <taxon>Vertebrata</taxon>
        <taxon>Euteleostomi</taxon>
        <taxon>Lepidosauria</taxon>
        <taxon>Squamata</taxon>
        <taxon>Bifurcata</taxon>
        <taxon>Unidentata</taxon>
        <taxon>Episquamata</taxon>
        <taxon>Toxicofera</taxon>
        <taxon>Serpentes</taxon>
        <taxon>Colubroidea</taxon>
        <taxon>Elapidae</taxon>
        <taxon>Elapinae</taxon>
        <taxon>Naja</taxon>
    </lineage>
</organism>
<accession>P60771</accession>
<accession>O13079</accession>
<accession>P01430</accession>
<accession>Q4PLR9</accession>
<protein>
    <recommendedName>
        <fullName>Cobrotoxin</fullName>
        <shortName>CBT</shortName>
    </recommendedName>
    <alternativeName>
        <fullName evidence="5">Short neurotoxin I</fullName>
        <shortName evidence="5">NT1</shortName>
    </alternativeName>
</protein>
<reference key="1">
    <citation type="submission" date="2005-05" db="EMBL/GenBank/DDBJ databases">
        <title>Cloning and expression of neurotoxin cDNA from Naja naja kaouthia lesson.</title>
        <authorList>
            <person name="Yao G.-T."/>
            <person name="Wei X.-H."/>
            <person name="Yu L.-X."/>
            <person name="Wang Z.-S."/>
            <person name="Feng Y."/>
            <person name="Song H."/>
            <person name="Zhang B.-B."/>
        </authorList>
    </citation>
    <scope>NUCLEOTIDE SEQUENCE [MRNA]</scope>
    <source>
        <tissue>Venom gland</tissue>
    </source>
</reference>
<reference key="2">
    <citation type="journal article" date="2002" name="Comp. Biochem. Physiol.">
        <title>A novel short neurotoxin, cobrotoxin c, from monocellate cobra (Naja kaouthia) venom: isolation and purification, primary and secondary structure determination, and tertiary structure modeling.</title>
        <authorList>
            <person name="Meng Q.-X."/>
            <person name="Wang W.-Y."/>
            <person name="Lu Q.-M."/>
            <person name="Jin Y."/>
            <person name="Wei J.-F."/>
            <person name="Zhu S.-W."/>
            <person name="Xiong Y.-L."/>
        </authorList>
    </citation>
    <scope>PROTEIN SEQUENCE OF 22-83</scope>
    <scope>TOXIC DOSE</scope>
    <scope>SUBCELLULAR LOCATION</scope>
    <source>
        <tissue>Venom</tissue>
    </source>
</reference>
<reference key="3">
    <citation type="journal article" date="2002" name="Biochim. Biophys. Acta">
        <title>Structure-function relationship of three neurotoxins from the venom of Naja kaouthia: a comparison between the NMR-derived structure of NT2 with its homologues, NT1 and NT3.</title>
        <authorList>
            <person name="Cheng Y."/>
            <person name="Meng Q.-X."/>
            <person name="Wang W.-Y."/>
            <person name="Wang J."/>
        </authorList>
    </citation>
    <scope>INHIBITORY CONCENTRATION</scope>
</reference>
<keyword id="KW-0008">Acetylcholine receptor inhibiting toxin</keyword>
<keyword id="KW-0903">Direct protein sequencing</keyword>
<keyword id="KW-1015">Disulfide bond</keyword>
<keyword id="KW-0872">Ion channel impairing toxin</keyword>
<keyword id="KW-0528">Neurotoxin</keyword>
<keyword id="KW-0629">Postsynaptic neurotoxin</keyword>
<keyword id="KW-0964">Secreted</keyword>
<keyword id="KW-0732">Signal</keyword>
<keyword id="KW-0800">Toxin</keyword>
<sequence>MKTLLLTLLVVTIVCLDLGYTLECHNQQSSQTPTTTGCSGGETNCYKKRWRDHRGYRTERGCGCPSVKNGIEINCCTTDRCNN</sequence>
<evidence type="ECO:0000250" key="1"/>
<evidence type="ECO:0000250" key="2">
    <source>
        <dbReference type="UniProtKB" id="P0C1Z0"/>
    </source>
</evidence>
<evidence type="ECO:0000250" key="3">
    <source>
        <dbReference type="UniProtKB" id="P60775"/>
    </source>
</evidence>
<evidence type="ECO:0000269" key="4">
    <source>
    </source>
</evidence>
<evidence type="ECO:0000303" key="5">
    <source>
    </source>
</evidence>
<evidence type="ECO:0000305" key="6"/>
<evidence type="ECO:0000305" key="7">
    <source>
    </source>
</evidence>
<proteinExistence type="evidence at protein level"/>
<dbReference type="EMBL" id="DQ066882">
    <property type="protein sequence ID" value="AAY63884.1"/>
    <property type="molecule type" value="mRNA"/>
</dbReference>
<dbReference type="BMRB" id="P60771"/>
<dbReference type="SMR" id="P60771"/>
<dbReference type="GO" id="GO:0005576">
    <property type="term" value="C:extracellular region"/>
    <property type="evidence" value="ECO:0007669"/>
    <property type="project" value="UniProtKB-SubCell"/>
</dbReference>
<dbReference type="GO" id="GO:0030550">
    <property type="term" value="F:acetylcholine receptor inhibitor activity"/>
    <property type="evidence" value="ECO:0007669"/>
    <property type="project" value="UniProtKB-KW"/>
</dbReference>
<dbReference type="GO" id="GO:0099106">
    <property type="term" value="F:ion channel regulator activity"/>
    <property type="evidence" value="ECO:0007669"/>
    <property type="project" value="UniProtKB-KW"/>
</dbReference>
<dbReference type="GO" id="GO:0090729">
    <property type="term" value="F:toxin activity"/>
    <property type="evidence" value="ECO:0007669"/>
    <property type="project" value="UniProtKB-KW"/>
</dbReference>
<dbReference type="CDD" id="cd00206">
    <property type="entry name" value="TFP_snake_toxin"/>
    <property type="match status" value="1"/>
</dbReference>
<dbReference type="FunFam" id="2.10.60.10:FF:000024">
    <property type="entry name" value="Cytotoxin 1"/>
    <property type="match status" value="1"/>
</dbReference>
<dbReference type="Gene3D" id="2.10.60.10">
    <property type="entry name" value="CD59"/>
    <property type="match status" value="1"/>
</dbReference>
<dbReference type="InterPro" id="IPR003571">
    <property type="entry name" value="Snake_3FTx"/>
</dbReference>
<dbReference type="InterPro" id="IPR045860">
    <property type="entry name" value="Snake_toxin-like_sf"/>
</dbReference>
<dbReference type="InterPro" id="IPR018354">
    <property type="entry name" value="Snake_toxin_con_site"/>
</dbReference>
<dbReference type="InterPro" id="IPR054131">
    <property type="entry name" value="Toxin_cobra-type"/>
</dbReference>
<dbReference type="Pfam" id="PF21947">
    <property type="entry name" value="Toxin_cobra-type"/>
    <property type="match status" value="1"/>
</dbReference>
<dbReference type="SUPFAM" id="SSF57302">
    <property type="entry name" value="Snake toxin-like"/>
    <property type="match status" value="1"/>
</dbReference>
<dbReference type="PROSITE" id="PS00272">
    <property type="entry name" value="SNAKE_TOXIN"/>
    <property type="match status" value="1"/>
</dbReference>
<feature type="signal peptide" evidence="4">
    <location>
        <begin position="1"/>
        <end position="21"/>
    </location>
</feature>
<feature type="chain" id="PRO_0000093591" description="Cobrotoxin" evidence="4">
    <location>
        <begin position="22"/>
        <end position="83"/>
    </location>
</feature>
<feature type="site" description="May be critical for toxicity" evidence="1">
    <location>
        <position position="54"/>
    </location>
</feature>
<feature type="site" description="May be critical for toxicity" evidence="1">
    <location>
        <position position="57"/>
    </location>
</feature>
<feature type="disulfide bond" evidence="2">
    <location>
        <begin position="24"/>
        <end position="45"/>
    </location>
</feature>
<feature type="disulfide bond" evidence="2">
    <location>
        <begin position="38"/>
        <end position="62"/>
    </location>
</feature>
<feature type="disulfide bond" evidence="2">
    <location>
        <begin position="64"/>
        <end position="75"/>
    </location>
</feature>
<feature type="disulfide bond" evidence="2">
    <location>
        <begin position="76"/>
        <end position="81"/>
    </location>
</feature>